<evidence type="ECO:0000255" key="1">
    <source>
        <dbReference type="HAMAP-Rule" id="MF_00091"/>
    </source>
</evidence>
<keyword id="KW-0071">Autoinducer synthesis</keyword>
<keyword id="KW-0408">Iron</keyword>
<keyword id="KW-0456">Lyase</keyword>
<keyword id="KW-0479">Metal-binding</keyword>
<keyword id="KW-0673">Quorum sensing</keyword>
<keyword id="KW-1185">Reference proteome</keyword>
<reference key="1">
    <citation type="submission" date="2009-05" db="EMBL/GenBank/DDBJ databases">
        <title>Complete sequence of Tolumonas auensis DSM 9187.</title>
        <authorList>
            <consortium name="US DOE Joint Genome Institute"/>
            <person name="Lucas S."/>
            <person name="Copeland A."/>
            <person name="Lapidus A."/>
            <person name="Glavina del Rio T."/>
            <person name="Tice H."/>
            <person name="Bruce D."/>
            <person name="Goodwin L."/>
            <person name="Pitluck S."/>
            <person name="Chertkov O."/>
            <person name="Brettin T."/>
            <person name="Detter J.C."/>
            <person name="Han C."/>
            <person name="Larimer F."/>
            <person name="Land M."/>
            <person name="Hauser L."/>
            <person name="Kyrpides N."/>
            <person name="Mikhailova N."/>
            <person name="Spring S."/>
            <person name="Beller H."/>
        </authorList>
    </citation>
    <scope>NUCLEOTIDE SEQUENCE [LARGE SCALE GENOMIC DNA]</scope>
    <source>
        <strain>DSM 9187 / NBRC 110442 / TA 4</strain>
    </source>
</reference>
<organism>
    <name type="scientific">Tolumonas auensis (strain DSM 9187 / NBRC 110442 / TA 4)</name>
    <dbReference type="NCBI Taxonomy" id="595494"/>
    <lineage>
        <taxon>Bacteria</taxon>
        <taxon>Pseudomonadati</taxon>
        <taxon>Pseudomonadota</taxon>
        <taxon>Gammaproteobacteria</taxon>
        <taxon>Aeromonadales</taxon>
        <taxon>Aeromonadaceae</taxon>
        <taxon>Tolumonas</taxon>
    </lineage>
</organism>
<proteinExistence type="inferred from homology"/>
<sequence>MPLLDSFTVDHTRMQAPAVRVAKQMRTPHGDPITVFDLRFCVPNQEILPERGIHTLEHLFAGFMRDHLNGSDVEIIDISPMGCRTGFYMCLIGTPDEARVAAAWSAAMEDVLKVVDQAKIPELNEYQCGTYQMHSLEEAHEIARAILAHGVGVNKNAELALPSDKLASL</sequence>
<accession>C4LCK3</accession>
<comment type="function">
    <text evidence="1">Involved in the synthesis of autoinducer 2 (AI-2) which is secreted by bacteria and is used to communicate both the cell density and the metabolic potential of the environment. The regulation of gene expression in response to changes in cell density is called quorum sensing. Catalyzes the transformation of S-ribosylhomocysteine (RHC) to homocysteine (HC) and 4,5-dihydroxy-2,3-pentadione (DPD).</text>
</comment>
<comment type="catalytic activity">
    <reaction evidence="1">
        <text>S-(5-deoxy-D-ribos-5-yl)-L-homocysteine = (S)-4,5-dihydroxypentane-2,3-dione + L-homocysteine</text>
        <dbReference type="Rhea" id="RHEA:17753"/>
        <dbReference type="ChEBI" id="CHEBI:29484"/>
        <dbReference type="ChEBI" id="CHEBI:58195"/>
        <dbReference type="ChEBI" id="CHEBI:58199"/>
        <dbReference type="EC" id="4.4.1.21"/>
    </reaction>
</comment>
<comment type="cofactor">
    <cofactor evidence="1">
        <name>Fe cation</name>
        <dbReference type="ChEBI" id="CHEBI:24875"/>
    </cofactor>
    <text evidence="1">Binds 1 Fe cation per subunit.</text>
</comment>
<comment type="subunit">
    <text evidence="1">Homodimer.</text>
</comment>
<comment type="similarity">
    <text evidence="1">Belongs to the LuxS family.</text>
</comment>
<name>LUXS_TOLAT</name>
<protein>
    <recommendedName>
        <fullName evidence="1">S-ribosylhomocysteine lyase</fullName>
        <ecNumber evidence="1">4.4.1.21</ecNumber>
    </recommendedName>
    <alternativeName>
        <fullName evidence="1">AI-2 synthesis protein</fullName>
    </alternativeName>
    <alternativeName>
        <fullName evidence="1">Autoinducer-2 production protein LuxS</fullName>
    </alternativeName>
</protein>
<dbReference type="EC" id="4.4.1.21" evidence="1"/>
<dbReference type="EMBL" id="CP001616">
    <property type="protein sequence ID" value="ACQ94507.1"/>
    <property type="molecule type" value="Genomic_DNA"/>
</dbReference>
<dbReference type="RefSeq" id="WP_015879956.1">
    <property type="nucleotide sequence ID" value="NC_012691.1"/>
</dbReference>
<dbReference type="SMR" id="C4LCK3"/>
<dbReference type="STRING" id="595494.Tola_2918"/>
<dbReference type="KEGG" id="tau:Tola_2918"/>
<dbReference type="eggNOG" id="COG1854">
    <property type="taxonomic scope" value="Bacteria"/>
</dbReference>
<dbReference type="HOGENOM" id="CLU_107531_2_0_6"/>
<dbReference type="OrthoDB" id="9788129at2"/>
<dbReference type="Proteomes" id="UP000009073">
    <property type="component" value="Chromosome"/>
</dbReference>
<dbReference type="GO" id="GO:0005506">
    <property type="term" value="F:iron ion binding"/>
    <property type="evidence" value="ECO:0007669"/>
    <property type="project" value="InterPro"/>
</dbReference>
<dbReference type="GO" id="GO:0043768">
    <property type="term" value="F:S-ribosylhomocysteine lyase activity"/>
    <property type="evidence" value="ECO:0007669"/>
    <property type="project" value="UniProtKB-UniRule"/>
</dbReference>
<dbReference type="GO" id="GO:0009372">
    <property type="term" value="P:quorum sensing"/>
    <property type="evidence" value="ECO:0007669"/>
    <property type="project" value="UniProtKB-UniRule"/>
</dbReference>
<dbReference type="FunFam" id="3.30.1360.80:FF:000001">
    <property type="entry name" value="S-ribosylhomocysteine lyase"/>
    <property type="match status" value="1"/>
</dbReference>
<dbReference type="Gene3D" id="3.30.1360.80">
    <property type="entry name" value="S-ribosylhomocysteinase (LuxS)"/>
    <property type="match status" value="1"/>
</dbReference>
<dbReference type="HAMAP" id="MF_00091">
    <property type="entry name" value="LuxS"/>
    <property type="match status" value="1"/>
</dbReference>
<dbReference type="InterPro" id="IPR037005">
    <property type="entry name" value="LuxS_sf"/>
</dbReference>
<dbReference type="InterPro" id="IPR011249">
    <property type="entry name" value="Metalloenz_LuxS/M16"/>
</dbReference>
<dbReference type="InterPro" id="IPR003815">
    <property type="entry name" value="S-ribosylhomocysteinase"/>
</dbReference>
<dbReference type="NCBIfam" id="NF002602">
    <property type="entry name" value="PRK02260.1-2"/>
    <property type="match status" value="1"/>
</dbReference>
<dbReference type="PANTHER" id="PTHR35799">
    <property type="entry name" value="S-RIBOSYLHOMOCYSTEINE LYASE"/>
    <property type="match status" value="1"/>
</dbReference>
<dbReference type="PANTHER" id="PTHR35799:SF1">
    <property type="entry name" value="S-RIBOSYLHOMOCYSTEINE LYASE"/>
    <property type="match status" value="1"/>
</dbReference>
<dbReference type="Pfam" id="PF02664">
    <property type="entry name" value="LuxS"/>
    <property type="match status" value="1"/>
</dbReference>
<dbReference type="PIRSF" id="PIRSF006160">
    <property type="entry name" value="AI2"/>
    <property type="match status" value="1"/>
</dbReference>
<dbReference type="PRINTS" id="PR01487">
    <property type="entry name" value="LUXSPROTEIN"/>
</dbReference>
<dbReference type="SUPFAM" id="SSF63411">
    <property type="entry name" value="LuxS/MPP-like metallohydrolase"/>
    <property type="match status" value="1"/>
</dbReference>
<gene>
    <name evidence="1" type="primary">luxS</name>
    <name type="ordered locus">Tola_2918</name>
</gene>
<feature type="chain" id="PRO_1000202675" description="S-ribosylhomocysteine lyase">
    <location>
        <begin position="1"/>
        <end position="169"/>
    </location>
</feature>
<feature type="binding site" evidence="1">
    <location>
        <position position="54"/>
    </location>
    <ligand>
        <name>Fe cation</name>
        <dbReference type="ChEBI" id="CHEBI:24875"/>
    </ligand>
</feature>
<feature type="binding site" evidence="1">
    <location>
        <position position="58"/>
    </location>
    <ligand>
        <name>Fe cation</name>
        <dbReference type="ChEBI" id="CHEBI:24875"/>
    </ligand>
</feature>
<feature type="binding site" evidence="1">
    <location>
        <position position="128"/>
    </location>
    <ligand>
        <name>Fe cation</name>
        <dbReference type="ChEBI" id="CHEBI:24875"/>
    </ligand>
</feature>